<name>EFTU_CHLT3</name>
<gene>
    <name evidence="2" type="primary">tuf</name>
    <name type="ordered locus">Ctha_1086</name>
</gene>
<comment type="function">
    <text evidence="2">GTP hydrolase that promotes the GTP-dependent binding of aminoacyl-tRNA to the A-site of ribosomes during protein biosynthesis.</text>
</comment>
<comment type="catalytic activity">
    <reaction evidence="2">
        <text>GTP + H2O = GDP + phosphate + H(+)</text>
        <dbReference type="Rhea" id="RHEA:19669"/>
        <dbReference type="ChEBI" id="CHEBI:15377"/>
        <dbReference type="ChEBI" id="CHEBI:15378"/>
        <dbReference type="ChEBI" id="CHEBI:37565"/>
        <dbReference type="ChEBI" id="CHEBI:43474"/>
        <dbReference type="ChEBI" id="CHEBI:58189"/>
        <dbReference type="EC" id="3.6.5.3"/>
    </reaction>
    <physiologicalReaction direction="left-to-right" evidence="2">
        <dbReference type="Rhea" id="RHEA:19670"/>
    </physiologicalReaction>
</comment>
<comment type="subunit">
    <text evidence="2">Monomer.</text>
</comment>
<comment type="subcellular location">
    <subcellularLocation>
        <location evidence="2">Cytoplasm</location>
    </subcellularLocation>
</comment>
<comment type="similarity">
    <text evidence="2">Belongs to the TRAFAC class translation factor GTPase superfamily. Classic translation factor GTPase family. EF-Tu/EF-1A subfamily.</text>
</comment>
<keyword id="KW-0963">Cytoplasm</keyword>
<keyword id="KW-0251">Elongation factor</keyword>
<keyword id="KW-0342">GTP-binding</keyword>
<keyword id="KW-0378">Hydrolase</keyword>
<keyword id="KW-0460">Magnesium</keyword>
<keyword id="KW-0479">Metal-binding</keyword>
<keyword id="KW-0547">Nucleotide-binding</keyword>
<keyword id="KW-0648">Protein biosynthesis</keyword>
<keyword id="KW-1185">Reference proteome</keyword>
<reference key="1">
    <citation type="submission" date="2008-06" db="EMBL/GenBank/DDBJ databases">
        <title>Complete sequence of Chloroherpeton thalassium ATCC 35110.</title>
        <authorList>
            <consortium name="US DOE Joint Genome Institute"/>
            <person name="Lucas S."/>
            <person name="Copeland A."/>
            <person name="Lapidus A."/>
            <person name="Glavina del Rio T."/>
            <person name="Dalin E."/>
            <person name="Tice H."/>
            <person name="Bruce D."/>
            <person name="Goodwin L."/>
            <person name="Pitluck S."/>
            <person name="Schmutz J."/>
            <person name="Larimer F."/>
            <person name="Land M."/>
            <person name="Hauser L."/>
            <person name="Kyrpides N."/>
            <person name="Mikhailova N."/>
            <person name="Liu Z."/>
            <person name="Li T."/>
            <person name="Zhao F."/>
            <person name="Overmann J."/>
            <person name="Bryant D.A."/>
            <person name="Richardson P."/>
        </authorList>
    </citation>
    <scope>NUCLEOTIDE SEQUENCE [LARGE SCALE GENOMIC DNA]</scope>
    <source>
        <strain>ATCC 35110 / GB-78</strain>
    </source>
</reference>
<proteinExistence type="inferred from homology"/>
<dbReference type="EC" id="3.6.5.3" evidence="2"/>
<dbReference type="EMBL" id="CP001100">
    <property type="protein sequence ID" value="ACF13550.1"/>
    <property type="molecule type" value="Genomic_DNA"/>
</dbReference>
<dbReference type="RefSeq" id="WP_012499634.1">
    <property type="nucleotide sequence ID" value="NC_011026.1"/>
</dbReference>
<dbReference type="SMR" id="B3QY22"/>
<dbReference type="STRING" id="517418.Ctha_1086"/>
<dbReference type="KEGG" id="cts:Ctha_1086"/>
<dbReference type="eggNOG" id="COG0050">
    <property type="taxonomic scope" value="Bacteria"/>
</dbReference>
<dbReference type="HOGENOM" id="CLU_007265_0_1_10"/>
<dbReference type="OrthoDB" id="9804504at2"/>
<dbReference type="Proteomes" id="UP000001208">
    <property type="component" value="Chromosome"/>
</dbReference>
<dbReference type="GO" id="GO:0005737">
    <property type="term" value="C:cytoplasm"/>
    <property type="evidence" value="ECO:0007669"/>
    <property type="project" value="UniProtKB-SubCell"/>
</dbReference>
<dbReference type="GO" id="GO:0005525">
    <property type="term" value="F:GTP binding"/>
    <property type="evidence" value="ECO:0007669"/>
    <property type="project" value="UniProtKB-UniRule"/>
</dbReference>
<dbReference type="GO" id="GO:0003924">
    <property type="term" value="F:GTPase activity"/>
    <property type="evidence" value="ECO:0007669"/>
    <property type="project" value="InterPro"/>
</dbReference>
<dbReference type="GO" id="GO:0003746">
    <property type="term" value="F:translation elongation factor activity"/>
    <property type="evidence" value="ECO:0007669"/>
    <property type="project" value="UniProtKB-UniRule"/>
</dbReference>
<dbReference type="CDD" id="cd01884">
    <property type="entry name" value="EF_Tu"/>
    <property type="match status" value="1"/>
</dbReference>
<dbReference type="CDD" id="cd03697">
    <property type="entry name" value="EFTU_II"/>
    <property type="match status" value="1"/>
</dbReference>
<dbReference type="CDD" id="cd03707">
    <property type="entry name" value="EFTU_III"/>
    <property type="match status" value="1"/>
</dbReference>
<dbReference type="FunFam" id="2.40.30.10:FF:000001">
    <property type="entry name" value="Elongation factor Tu"/>
    <property type="match status" value="1"/>
</dbReference>
<dbReference type="FunFam" id="3.40.50.300:FF:000003">
    <property type="entry name" value="Elongation factor Tu"/>
    <property type="match status" value="1"/>
</dbReference>
<dbReference type="Gene3D" id="3.40.50.300">
    <property type="entry name" value="P-loop containing nucleotide triphosphate hydrolases"/>
    <property type="match status" value="1"/>
</dbReference>
<dbReference type="Gene3D" id="2.40.30.10">
    <property type="entry name" value="Translation factors"/>
    <property type="match status" value="2"/>
</dbReference>
<dbReference type="HAMAP" id="MF_00118_B">
    <property type="entry name" value="EF_Tu_B"/>
    <property type="match status" value="1"/>
</dbReference>
<dbReference type="InterPro" id="IPR041709">
    <property type="entry name" value="EF-Tu_GTP-bd"/>
</dbReference>
<dbReference type="InterPro" id="IPR050055">
    <property type="entry name" value="EF-Tu_GTPase"/>
</dbReference>
<dbReference type="InterPro" id="IPR004161">
    <property type="entry name" value="EFTu-like_2"/>
</dbReference>
<dbReference type="InterPro" id="IPR033720">
    <property type="entry name" value="EFTU_2"/>
</dbReference>
<dbReference type="InterPro" id="IPR031157">
    <property type="entry name" value="G_TR_CS"/>
</dbReference>
<dbReference type="InterPro" id="IPR027417">
    <property type="entry name" value="P-loop_NTPase"/>
</dbReference>
<dbReference type="InterPro" id="IPR005225">
    <property type="entry name" value="Small_GTP-bd"/>
</dbReference>
<dbReference type="InterPro" id="IPR000795">
    <property type="entry name" value="T_Tr_GTP-bd_dom"/>
</dbReference>
<dbReference type="InterPro" id="IPR009000">
    <property type="entry name" value="Transl_B-barrel_sf"/>
</dbReference>
<dbReference type="InterPro" id="IPR009001">
    <property type="entry name" value="Transl_elong_EF1A/Init_IF2_C"/>
</dbReference>
<dbReference type="InterPro" id="IPR004541">
    <property type="entry name" value="Transl_elong_EFTu/EF1A_bac/org"/>
</dbReference>
<dbReference type="InterPro" id="IPR004160">
    <property type="entry name" value="Transl_elong_EFTu/EF1A_C"/>
</dbReference>
<dbReference type="NCBIfam" id="TIGR00485">
    <property type="entry name" value="EF-Tu"/>
    <property type="match status" value="1"/>
</dbReference>
<dbReference type="NCBIfam" id="NF000766">
    <property type="entry name" value="PRK00049.1"/>
    <property type="match status" value="1"/>
</dbReference>
<dbReference type="NCBIfam" id="NF009372">
    <property type="entry name" value="PRK12735.1"/>
    <property type="match status" value="1"/>
</dbReference>
<dbReference type="NCBIfam" id="NF009373">
    <property type="entry name" value="PRK12736.1"/>
    <property type="match status" value="1"/>
</dbReference>
<dbReference type="NCBIfam" id="TIGR00231">
    <property type="entry name" value="small_GTP"/>
    <property type="match status" value="1"/>
</dbReference>
<dbReference type="PANTHER" id="PTHR43721:SF22">
    <property type="entry name" value="ELONGATION FACTOR TU, MITOCHONDRIAL"/>
    <property type="match status" value="1"/>
</dbReference>
<dbReference type="PANTHER" id="PTHR43721">
    <property type="entry name" value="ELONGATION FACTOR TU-RELATED"/>
    <property type="match status" value="1"/>
</dbReference>
<dbReference type="Pfam" id="PF00009">
    <property type="entry name" value="GTP_EFTU"/>
    <property type="match status" value="1"/>
</dbReference>
<dbReference type="Pfam" id="PF03144">
    <property type="entry name" value="GTP_EFTU_D2"/>
    <property type="match status" value="1"/>
</dbReference>
<dbReference type="Pfam" id="PF03143">
    <property type="entry name" value="GTP_EFTU_D3"/>
    <property type="match status" value="1"/>
</dbReference>
<dbReference type="PRINTS" id="PR00315">
    <property type="entry name" value="ELONGATNFCT"/>
</dbReference>
<dbReference type="SUPFAM" id="SSF50465">
    <property type="entry name" value="EF-Tu/eEF-1alpha/eIF2-gamma C-terminal domain"/>
    <property type="match status" value="1"/>
</dbReference>
<dbReference type="SUPFAM" id="SSF52540">
    <property type="entry name" value="P-loop containing nucleoside triphosphate hydrolases"/>
    <property type="match status" value="1"/>
</dbReference>
<dbReference type="SUPFAM" id="SSF50447">
    <property type="entry name" value="Translation proteins"/>
    <property type="match status" value="1"/>
</dbReference>
<dbReference type="PROSITE" id="PS00301">
    <property type="entry name" value="G_TR_1"/>
    <property type="match status" value="1"/>
</dbReference>
<dbReference type="PROSITE" id="PS51722">
    <property type="entry name" value="G_TR_2"/>
    <property type="match status" value="1"/>
</dbReference>
<evidence type="ECO:0000250" key="1"/>
<evidence type="ECO:0000255" key="2">
    <source>
        <dbReference type="HAMAP-Rule" id="MF_00118"/>
    </source>
</evidence>
<feature type="chain" id="PRO_1000095057" description="Elongation factor Tu">
    <location>
        <begin position="1"/>
        <end position="393"/>
    </location>
</feature>
<feature type="domain" description="tr-type G">
    <location>
        <begin position="10"/>
        <end position="203"/>
    </location>
</feature>
<feature type="region of interest" description="G1" evidence="1">
    <location>
        <begin position="19"/>
        <end position="26"/>
    </location>
</feature>
<feature type="region of interest" description="G2" evidence="1">
    <location>
        <begin position="60"/>
        <end position="64"/>
    </location>
</feature>
<feature type="region of interest" description="G3" evidence="1">
    <location>
        <begin position="81"/>
        <end position="84"/>
    </location>
</feature>
<feature type="region of interest" description="G4" evidence="1">
    <location>
        <begin position="136"/>
        <end position="139"/>
    </location>
</feature>
<feature type="region of interest" description="G5" evidence="1">
    <location>
        <begin position="173"/>
        <end position="175"/>
    </location>
</feature>
<feature type="binding site" evidence="2">
    <location>
        <begin position="19"/>
        <end position="26"/>
    </location>
    <ligand>
        <name>GTP</name>
        <dbReference type="ChEBI" id="CHEBI:37565"/>
    </ligand>
</feature>
<feature type="binding site" evidence="2">
    <location>
        <position position="26"/>
    </location>
    <ligand>
        <name>Mg(2+)</name>
        <dbReference type="ChEBI" id="CHEBI:18420"/>
    </ligand>
</feature>
<feature type="binding site" evidence="2">
    <location>
        <begin position="81"/>
        <end position="85"/>
    </location>
    <ligand>
        <name>GTP</name>
        <dbReference type="ChEBI" id="CHEBI:37565"/>
    </ligand>
</feature>
<feature type="binding site" evidence="2">
    <location>
        <begin position="136"/>
        <end position="139"/>
    </location>
    <ligand>
        <name>GTP</name>
        <dbReference type="ChEBI" id="CHEBI:37565"/>
    </ligand>
</feature>
<organism>
    <name type="scientific">Chloroherpeton thalassium (strain ATCC 35110 / GB-78)</name>
    <dbReference type="NCBI Taxonomy" id="517418"/>
    <lineage>
        <taxon>Bacteria</taxon>
        <taxon>Pseudomonadati</taxon>
        <taxon>Chlorobiota</taxon>
        <taxon>Chlorobiia</taxon>
        <taxon>Chlorobiales</taxon>
        <taxon>Chloroherpetonaceae</taxon>
        <taxon>Chloroherpeton</taxon>
    </lineage>
</organism>
<protein>
    <recommendedName>
        <fullName evidence="2">Elongation factor Tu</fullName>
        <shortName evidence="2">EF-Tu</shortName>
        <ecNumber evidence="2">3.6.5.3</ecNumber>
    </recommendedName>
</protein>
<sequence length="393" mass="42990">MAKESYKREKPHVNIGTIGHVDHGKTTLTAAITKVLSEKGQAQKMDFDEIDKAPEEKERGITISTSHVEYETPSRHYAHIDCPGHADYVKNMITGAAQMDGAILVVAATDGPMPQTREHILLAKQVNVPSIVVFMNKVDIADPELIELVEMELRELLSSYGFPGDDIPIIQGSALGALNGEAEWVGKIEELMEAVDNYIPTPVRDVDKPFLMPVEDVFSISGRGTVGTGRIERGVIKINEEVELVGIRPTKKSVVTGIEMFRKLLDQGEAGDNAGLLLRGVNKDELERGMVIAKPGSITPHTKFKAEVYILKKEEGGRHTPFFNGYRPQFYFRTTDVTGSVNLPDGVEMVMPGDNLSIEAELIAPIAMDEGLRFAIREGGRTVGAGTVTSIIE</sequence>
<accession>B3QY22</accession>